<reference key="1">
    <citation type="journal article" date="1995" name="Plant Mol. Biol. Rep.">
        <title>Complete nucleotide sequence of the Porphyra purpurea chloroplast genome.</title>
        <authorList>
            <person name="Reith M.E."/>
            <person name="Munholland J."/>
        </authorList>
    </citation>
    <scope>NUCLEOTIDE SEQUENCE [LARGE SCALE GENOMIC DNA]</scope>
    <source>
        <strain>Avonport</strain>
    </source>
</reference>
<feature type="chain" id="PRO_0000131670" description="Small ribosomal subunit protein uS5c">
    <location>
        <begin position="1"/>
        <end position="174"/>
    </location>
</feature>
<feature type="domain" description="S5 DRBM">
    <location>
        <begin position="17"/>
        <end position="80"/>
    </location>
</feature>
<keyword id="KW-0150">Chloroplast</keyword>
<keyword id="KW-0934">Plastid</keyword>
<keyword id="KW-0687">Ribonucleoprotein</keyword>
<keyword id="KW-0689">Ribosomal protein</keyword>
<keyword id="KW-0694">RNA-binding</keyword>
<keyword id="KW-0699">rRNA-binding</keyword>
<protein>
    <recommendedName>
        <fullName evidence="2">Small ribosomal subunit protein uS5c</fullName>
    </recommendedName>
    <alternativeName>
        <fullName>30S ribosomal protein S5, chloroplastic</fullName>
    </alternativeName>
</protein>
<evidence type="ECO:0000250" key="1"/>
<evidence type="ECO:0000305" key="2"/>
<geneLocation type="chloroplast"/>
<gene>
    <name type="primary">rps5</name>
</gene>
<comment type="function">
    <text evidence="1">With S4 and S12 plays an important role in translational accuracy.</text>
</comment>
<comment type="subunit">
    <text evidence="1">Part of the 30S ribosomal subunit. Contacts protein S4 (By similarity).</text>
</comment>
<comment type="subcellular location">
    <subcellularLocation>
        <location>Plastid</location>
        <location>Chloroplast</location>
    </subcellularLocation>
</comment>
<comment type="domain">
    <text>The N-terminal domain interacts with the head of the 30S subunit; the C-terminal domain interacts with the body and contacts protein S4. The interaction surface between S4 and S5 is involved in control of translational fidelity.</text>
</comment>
<comment type="similarity">
    <text evidence="2">Belongs to the universal ribosomal protein uS5 family.</text>
</comment>
<proteinExistence type="inferred from homology"/>
<dbReference type="EMBL" id="U38804">
    <property type="protein sequence ID" value="AAC08184.1"/>
    <property type="molecule type" value="Genomic_DNA"/>
</dbReference>
<dbReference type="PIR" id="S73219">
    <property type="entry name" value="S73219"/>
</dbReference>
<dbReference type="RefSeq" id="NP_053908.1">
    <property type="nucleotide sequence ID" value="NC_000925.1"/>
</dbReference>
<dbReference type="SMR" id="P51298"/>
<dbReference type="GeneID" id="809927"/>
<dbReference type="GO" id="GO:0009507">
    <property type="term" value="C:chloroplast"/>
    <property type="evidence" value="ECO:0007669"/>
    <property type="project" value="UniProtKB-SubCell"/>
</dbReference>
<dbReference type="GO" id="GO:0015935">
    <property type="term" value="C:small ribosomal subunit"/>
    <property type="evidence" value="ECO:0007669"/>
    <property type="project" value="InterPro"/>
</dbReference>
<dbReference type="GO" id="GO:0019843">
    <property type="term" value="F:rRNA binding"/>
    <property type="evidence" value="ECO:0007669"/>
    <property type="project" value="UniProtKB-UniRule"/>
</dbReference>
<dbReference type="GO" id="GO:0003735">
    <property type="term" value="F:structural constituent of ribosome"/>
    <property type="evidence" value="ECO:0007669"/>
    <property type="project" value="InterPro"/>
</dbReference>
<dbReference type="GO" id="GO:0006412">
    <property type="term" value="P:translation"/>
    <property type="evidence" value="ECO:0007669"/>
    <property type="project" value="UniProtKB-UniRule"/>
</dbReference>
<dbReference type="FunFam" id="3.30.230.10:FF:000002">
    <property type="entry name" value="30S ribosomal protein S5"/>
    <property type="match status" value="1"/>
</dbReference>
<dbReference type="Gene3D" id="3.30.160.20">
    <property type="match status" value="1"/>
</dbReference>
<dbReference type="Gene3D" id="3.30.230.10">
    <property type="match status" value="1"/>
</dbReference>
<dbReference type="HAMAP" id="MF_01307_B">
    <property type="entry name" value="Ribosomal_uS5_B"/>
    <property type="match status" value="1"/>
</dbReference>
<dbReference type="InterPro" id="IPR020568">
    <property type="entry name" value="Ribosomal_Su5_D2-typ_SF"/>
</dbReference>
<dbReference type="InterPro" id="IPR000851">
    <property type="entry name" value="Ribosomal_uS5"/>
</dbReference>
<dbReference type="InterPro" id="IPR005712">
    <property type="entry name" value="Ribosomal_uS5_bac-type"/>
</dbReference>
<dbReference type="InterPro" id="IPR005324">
    <property type="entry name" value="Ribosomal_uS5_C"/>
</dbReference>
<dbReference type="InterPro" id="IPR013810">
    <property type="entry name" value="Ribosomal_uS5_N"/>
</dbReference>
<dbReference type="InterPro" id="IPR018192">
    <property type="entry name" value="Ribosomal_uS5_N_CS"/>
</dbReference>
<dbReference type="InterPro" id="IPR014721">
    <property type="entry name" value="Ribsml_uS5_D2-typ_fold_subgr"/>
</dbReference>
<dbReference type="NCBIfam" id="TIGR01021">
    <property type="entry name" value="rpsE_bact"/>
    <property type="match status" value="1"/>
</dbReference>
<dbReference type="PANTHER" id="PTHR48277">
    <property type="entry name" value="MITOCHONDRIAL RIBOSOMAL PROTEIN S5"/>
    <property type="match status" value="1"/>
</dbReference>
<dbReference type="PANTHER" id="PTHR48277:SF1">
    <property type="entry name" value="MITOCHONDRIAL RIBOSOMAL PROTEIN S5"/>
    <property type="match status" value="1"/>
</dbReference>
<dbReference type="Pfam" id="PF00333">
    <property type="entry name" value="Ribosomal_S5"/>
    <property type="match status" value="1"/>
</dbReference>
<dbReference type="Pfam" id="PF03719">
    <property type="entry name" value="Ribosomal_S5_C"/>
    <property type="match status" value="1"/>
</dbReference>
<dbReference type="SUPFAM" id="SSF54768">
    <property type="entry name" value="dsRNA-binding domain-like"/>
    <property type="match status" value="1"/>
</dbReference>
<dbReference type="SUPFAM" id="SSF54211">
    <property type="entry name" value="Ribosomal protein S5 domain 2-like"/>
    <property type="match status" value="1"/>
</dbReference>
<dbReference type="PROSITE" id="PS00585">
    <property type="entry name" value="RIBOSOMAL_S5"/>
    <property type="match status" value="1"/>
</dbReference>
<dbReference type="PROSITE" id="PS50881">
    <property type="entry name" value="S5_DSRBD"/>
    <property type="match status" value="1"/>
</dbReference>
<name>RR5_PORPU</name>
<organism>
    <name type="scientific">Porphyra purpurea</name>
    <name type="common">Red seaweed</name>
    <name type="synonym">Ulva purpurea</name>
    <dbReference type="NCBI Taxonomy" id="2787"/>
    <lineage>
        <taxon>Eukaryota</taxon>
        <taxon>Rhodophyta</taxon>
        <taxon>Bangiophyceae</taxon>
        <taxon>Bangiales</taxon>
        <taxon>Bangiaceae</taxon>
        <taxon>Porphyra</taxon>
    </lineage>
</organism>
<sequence length="174" mass="18294">MANRKKQGKSKEKDNGWEERVVQVKRVTKVVKGGKKLSFRVILVVGNEQGQVGVGVGKASDVIGAVKKGVTDAKKHLVTVPLTKSNSIPHPINGISGAAQVILRPSAPGSGVIAGGSVRTVLELSGVQNILAKQLGSNNTLNNARAVLNGLTQLRTFSEAAKDRGVPIENLYSK</sequence>
<accession>P51298</accession>